<protein>
    <recommendedName>
        <fullName>Uncharacterized protein C18orf63</fullName>
    </recommendedName>
</protein>
<evidence type="ECO:0000256" key="1">
    <source>
        <dbReference type="SAM" id="MobiDB-lite"/>
    </source>
</evidence>
<evidence type="ECO:0000305" key="2"/>
<proteinExistence type="evidence at protein level"/>
<dbReference type="EMBL" id="CR749350">
    <property type="protein sequence ID" value="CAH18203.1"/>
    <property type="molecule type" value="mRNA"/>
</dbReference>
<dbReference type="EMBL" id="AC090398">
    <property type="status" value="NOT_ANNOTATED_CDS"/>
    <property type="molecule type" value="Genomic_DNA"/>
</dbReference>
<dbReference type="CCDS" id="CCDS54189.1"/>
<dbReference type="RefSeq" id="NP_001167594.1">
    <property type="nucleotide sequence ID" value="NM_001174123.2"/>
</dbReference>
<dbReference type="BioGRID" id="569262">
    <property type="interactions" value="6"/>
</dbReference>
<dbReference type="FunCoup" id="Q68DL7">
    <property type="interactions" value="3"/>
</dbReference>
<dbReference type="IntAct" id="Q68DL7">
    <property type="interactions" value="5"/>
</dbReference>
<dbReference type="MINT" id="Q68DL7"/>
<dbReference type="STRING" id="9606.ENSP00000464330"/>
<dbReference type="GlyGen" id="Q68DL7">
    <property type="glycosylation" value="4 sites, 1 N-linked glycan (1 site), 1 O-linked glycan (3 sites)"/>
</dbReference>
<dbReference type="iPTMnet" id="Q68DL7"/>
<dbReference type="PhosphoSitePlus" id="Q68DL7"/>
<dbReference type="BioMuta" id="C18orf63"/>
<dbReference type="DMDM" id="205831170"/>
<dbReference type="jPOST" id="Q68DL7"/>
<dbReference type="MassIVE" id="Q68DL7"/>
<dbReference type="PaxDb" id="9606-ENSP00000464330"/>
<dbReference type="PeptideAtlas" id="Q68DL7"/>
<dbReference type="ProteomicsDB" id="66091"/>
<dbReference type="Antibodypedia" id="49131">
    <property type="antibodies" value="3 antibodies from 3 providers"/>
</dbReference>
<dbReference type="DNASU" id="644041"/>
<dbReference type="Ensembl" id="ENST00000579455.2">
    <property type="protein sequence ID" value="ENSP00000464330.2"/>
    <property type="gene ID" value="ENSG00000206043.7"/>
</dbReference>
<dbReference type="GeneID" id="644041"/>
<dbReference type="KEGG" id="hsa:644041"/>
<dbReference type="MANE-Select" id="ENST00000579455.2">
    <property type="protein sequence ID" value="ENSP00000464330.2"/>
    <property type="RefSeq nucleotide sequence ID" value="NM_001174123.2"/>
    <property type="RefSeq protein sequence ID" value="NP_001167594.1"/>
</dbReference>
<dbReference type="UCSC" id="uc002llj.4">
    <property type="organism name" value="human"/>
</dbReference>
<dbReference type="AGR" id="HGNC:40037"/>
<dbReference type="CTD" id="644041"/>
<dbReference type="GeneCards" id="C18orf63"/>
<dbReference type="HGNC" id="HGNC:40037">
    <property type="gene designation" value="C18orf63"/>
</dbReference>
<dbReference type="HPA" id="ENSG00000206043">
    <property type="expression patterns" value="Tissue enriched (testis)"/>
</dbReference>
<dbReference type="neXtProt" id="NX_Q68DL7"/>
<dbReference type="OpenTargets" id="ENSG00000206043"/>
<dbReference type="VEuPathDB" id="HostDB:ENSG00000206043"/>
<dbReference type="eggNOG" id="KOG3815">
    <property type="taxonomic scope" value="Eukaryota"/>
</dbReference>
<dbReference type="GeneTree" id="ENSGT00390000007627"/>
<dbReference type="HOGENOM" id="CLU_018345_0_0_1"/>
<dbReference type="InParanoid" id="Q68DL7"/>
<dbReference type="OMA" id="SQHNIAP"/>
<dbReference type="OrthoDB" id="6285995at2759"/>
<dbReference type="PAN-GO" id="Q68DL7">
    <property type="GO annotations" value="0 GO annotations based on evolutionary models"/>
</dbReference>
<dbReference type="PhylomeDB" id="Q68DL7"/>
<dbReference type="TreeFam" id="TF342752"/>
<dbReference type="PathwayCommons" id="Q68DL7"/>
<dbReference type="SignaLink" id="Q68DL7"/>
<dbReference type="BioGRID-ORCS" id="644041">
    <property type="hits" value="10 hits in 1110 CRISPR screens"/>
</dbReference>
<dbReference type="GenomeRNAi" id="644041"/>
<dbReference type="Pharos" id="Q68DL7">
    <property type="development level" value="Tdark"/>
</dbReference>
<dbReference type="PRO" id="PR:Q68DL7"/>
<dbReference type="Proteomes" id="UP000005640">
    <property type="component" value="Chromosome 18"/>
</dbReference>
<dbReference type="RNAct" id="Q68DL7">
    <property type="molecule type" value="protein"/>
</dbReference>
<dbReference type="Bgee" id="ENSG00000206043">
    <property type="expression patterns" value="Expressed in male germ line stem cell (sensu Vertebrata) in testis and 5 other cell types or tissues"/>
</dbReference>
<dbReference type="InterPro" id="IPR031643">
    <property type="entry name" value="DUF4708"/>
</dbReference>
<dbReference type="PANTHER" id="PTHR28495:SF1">
    <property type="entry name" value="GENE, 17266-RELATED"/>
    <property type="match status" value="1"/>
</dbReference>
<dbReference type="PANTHER" id="PTHR28495">
    <property type="entry name" value="HYPOTHETICAL PROTEIN LOC100359752"/>
    <property type="match status" value="1"/>
</dbReference>
<dbReference type="Pfam" id="PF15813">
    <property type="entry name" value="DUF4708"/>
    <property type="match status" value="1"/>
</dbReference>
<feature type="chain" id="PRO_0000348945" description="Uncharacterized protein C18orf63">
    <location>
        <begin position="1"/>
        <end position="685"/>
    </location>
</feature>
<feature type="region of interest" description="Disordered" evidence="1">
    <location>
        <begin position="502"/>
        <end position="538"/>
    </location>
</feature>
<feature type="region of interest" description="Disordered" evidence="1">
    <location>
        <begin position="635"/>
        <end position="685"/>
    </location>
</feature>
<feature type="compositionally biased region" description="Polar residues" evidence="1">
    <location>
        <begin position="518"/>
        <end position="538"/>
    </location>
</feature>
<feature type="compositionally biased region" description="Basic residues" evidence="1">
    <location>
        <begin position="675"/>
        <end position="685"/>
    </location>
</feature>
<feature type="sequence conflict" description="In Ref. 1; CAH18203." evidence="2" ref="1">
    <original>F</original>
    <variation>Y</variation>
    <location>
        <position position="548"/>
    </location>
</feature>
<feature type="sequence conflict" description="In Ref. 1; CAH18203." evidence="2" ref="1">
    <original>L</original>
    <variation>P</variation>
    <location>
        <position position="676"/>
    </location>
</feature>
<organism>
    <name type="scientific">Homo sapiens</name>
    <name type="common">Human</name>
    <dbReference type="NCBI Taxonomy" id="9606"/>
    <lineage>
        <taxon>Eukaryota</taxon>
        <taxon>Metazoa</taxon>
        <taxon>Chordata</taxon>
        <taxon>Craniata</taxon>
        <taxon>Vertebrata</taxon>
        <taxon>Euteleostomi</taxon>
        <taxon>Mammalia</taxon>
        <taxon>Eutheria</taxon>
        <taxon>Euarchontoglires</taxon>
        <taxon>Primates</taxon>
        <taxon>Haplorrhini</taxon>
        <taxon>Catarrhini</taxon>
        <taxon>Hominidae</taxon>
        <taxon>Homo</taxon>
    </lineage>
</organism>
<keyword id="KW-1267">Proteomics identification</keyword>
<keyword id="KW-1185">Reference proteome</keyword>
<name>CR063_HUMAN</name>
<accession>Q68DL7</accession>
<accession>A6NME8</accession>
<reference key="1">
    <citation type="journal article" date="2007" name="BMC Genomics">
        <title>The full-ORF clone resource of the German cDNA consortium.</title>
        <authorList>
            <person name="Bechtel S."/>
            <person name="Rosenfelder H."/>
            <person name="Duda A."/>
            <person name="Schmidt C.P."/>
            <person name="Ernst U."/>
            <person name="Wellenreuther R."/>
            <person name="Mehrle A."/>
            <person name="Schuster C."/>
            <person name="Bahr A."/>
            <person name="Bloecker H."/>
            <person name="Heubner D."/>
            <person name="Hoerlein A."/>
            <person name="Michel G."/>
            <person name="Wedler H."/>
            <person name="Koehrer K."/>
            <person name="Ottenwaelder B."/>
            <person name="Poustka A."/>
            <person name="Wiemann S."/>
            <person name="Schupp I."/>
        </authorList>
    </citation>
    <scope>NUCLEOTIDE SEQUENCE [LARGE SCALE MRNA]</scope>
    <source>
        <tissue>Testis</tissue>
    </source>
</reference>
<reference key="2">
    <citation type="journal article" date="2005" name="Nature">
        <title>DNA sequence and analysis of human chromosome 18.</title>
        <authorList>
            <person name="Nusbaum C."/>
            <person name="Zody M.C."/>
            <person name="Borowsky M.L."/>
            <person name="Kamal M."/>
            <person name="Kodira C.D."/>
            <person name="Taylor T.D."/>
            <person name="Whittaker C.A."/>
            <person name="Chang J.L."/>
            <person name="Cuomo C.A."/>
            <person name="Dewar K."/>
            <person name="FitzGerald M.G."/>
            <person name="Yang X."/>
            <person name="Abouelleil A."/>
            <person name="Allen N.R."/>
            <person name="Anderson S."/>
            <person name="Bloom T."/>
            <person name="Bugalter B."/>
            <person name="Butler J."/>
            <person name="Cook A."/>
            <person name="DeCaprio D."/>
            <person name="Engels R."/>
            <person name="Garber M."/>
            <person name="Gnirke A."/>
            <person name="Hafez N."/>
            <person name="Hall J.L."/>
            <person name="Norman C.H."/>
            <person name="Itoh T."/>
            <person name="Jaffe D.B."/>
            <person name="Kuroki Y."/>
            <person name="Lehoczky J."/>
            <person name="Lui A."/>
            <person name="Macdonald P."/>
            <person name="Mauceli E."/>
            <person name="Mikkelsen T.S."/>
            <person name="Naylor J.W."/>
            <person name="Nicol R."/>
            <person name="Nguyen C."/>
            <person name="Noguchi H."/>
            <person name="O'Leary S.B."/>
            <person name="Piqani B."/>
            <person name="Smith C.L."/>
            <person name="Talamas J.A."/>
            <person name="Topham K."/>
            <person name="Totoki Y."/>
            <person name="Toyoda A."/>
            <person name="Wain H.M."/>
            <person name="Young S.K."/>
            <person name="Zeng Q."/>
            <person name="Zimmer A.R."/>
            <person name="Fujiyama A."/>
            <person name="Hattori M."/>
            <person name="Birren B.W."/>
            <person name="Sakaki Y."/>
            <person name="Lander E.S."/>
        </authorList>
    </citation>
    <scope>NUCLEOTIDE SEQUENCE [LARGE SCALE GENOMIC DNA]</scope>
</reference>
<gene>
    <name type="primary">C18orf63</name>
</gene>
<sequence length="685" mass="77230">MNDSRQQSLFFITLPDLNKLCAVRIILSNKVADTEIRTIQMKMCRQLLFLHQDILTSPVSGILNQIWVVMAIPFYKARKLNAYVEKYGAKMEAPQRVIPVILQNCLSYSFMARLAPAWNRTGHLLIQGRDFLSQMGKQSAVVLNINVTETQVCLSIEACTIRLPAPELKEFEISQSIIKDFHANKHAVIERHSILSNWCYVLPSMKMGQIINIFHAIPAACPFHSYGDFQRHWDALYGYKLPGDCGKIKIYCNIYFKMLGERTFTYPLSCIRSQPMQFFPRVDSEVVLKSFLSDLKSKLPHICGFPIKMTSKPCYYTQELTKPNIQEHKVKPPNLTTKKMLRASLTQATSRKPACAQSLLPCSVAVDHKVELSVSQPTSGIFSALHLQPESVQGRKKSLSIRAPQVHSEVLMPNRGNTQVQHTNLSSQSNITPKFVPVFKNRLLQMNKNTSVLGSPKRKQHDVTQSKLFSLKTSMIQHDKLNLGPAIKNRYSSNIQMQAANNLNQENSRPLQEKNTESSENMTKFPSSRGKSTVSLNKNKQLSNSAVFVVSNNNLGVVKSAVDFQMKGKENLTGKGITQILGKSHGSLKLKRQPHIFESDGETEDPRLLQQQSENQAKEVGTSDHRLIVSKIAHRSKRKLCPESSKTSKKHHSDTVHYGQSSSSKKQILDSDKSKLKKSLIIHNA</sequence>